<feature type="chain" id="PRO_1000070875" description="D-aminopeptidase">
    <location>
        <begin position="1"/>
        <end position="516"/>
    </location>
</feature>
<feature type="region of interest" description="Important for specificity" evidence="1">
    <location>
        <begin position="476"/>
        <end position="486"/>
    </location>
</feature>
<feature type="active site" description="Nucleophile" evidence="1">
    <location>
        <position position="61"/>
    </location>
</feature>
<feature type="active site" description="Proton donor/acceptor" evidence="1">
    <location>
        <position position="64"/>
    </location>
</feature>
<feature type="binding site" evidence="1">
    <location>
        <position position="480"/>
    </location>
    <ligand>
        <name>substrate</name>
    </ligand>
</feature>
<dbReference type="EC" id="3.4.11.19" evidence="1"/>
<dbReference type="EMBL" id="CP000578">
    <property type="protein sequence ID" value="ABN79059.1"/>
    <property type="molecule type" value="Genomic_DNA"/>
</dbReference>
<dbReference type="RefSeq" id="WP_011842788.1">
    <property type="nucleotide sequence ID" value="NC_009050.1"/>
</dbReference>
<dbReference type="SMR" id="A3PRU3"/>
<dbReference type="MEROPS" id="S12.002"/>
<dbReference type="KEGG" id="rsh:Rsph17029_3981"/>
<dbReference type="HOGENOM" id="CLU_020027_0_4_5"/>
<dbReference type="GO" id="GO:0004177">
    <property type="term" value="F:aminopeptidase activity"/>
    <property type="evidence" value="ECO:0007669"/>
    <property type="project" value="UniProtKB-UniRule"/>
</dbReference>
<dbReference type="GO" id="GO:0006508">
    <property type="term" value="P:proteolysis"/>
    <property type="evidence" value="ECO:0007669"/>
    <property type="project" value="UniProtKB-KW"/>
</dbReference>
<dbReference type="Gene3D" id="2.40.128.50">
    <property type="match status" value="2"/>
</dbReference>
<dbReference type="Gene3D" id="3.40.710.10">
    <property type="entry name" value="DD-peptidase/beta-lactamase superfamily"/>
    <property type="match status" value="1"/>
</dbReference>
<dbReference type="HAMAP" id="MF_01960">
    <property type="entry name" value="D_aminopeptidase"/>
    <property type="match status" value="1"/>
</dbReference>
<dbReference type="InterPro" id="IPR050491">
    <property type="entry name" value="Bact_CellWall_Synth/Modif"/>
</dbReference>
<dbReference type="InterPro" id="IPR001466">
    <property type="entry name" value="Beta-lactam-related"/>
</dbReference>
<dbReference type="InterPro" id="IPR012338">
    <property type="entry name" value="Beta-lactam/transpept-like"/>
</dbReference>
<dbReference type="InterPro" id="IPR027279">
    <property type="entry name" value="D_amino_pept/lipop_sf"/>
</dbReference>
<dbReference type="InterPro" id="IPR023645">
    <property type="entry name" value="DAP"/>
</dbReference>
<dbReference type="InterPro" id="IPR012856">
    <property type="entry name" value="DAP_B_dom"/>
</dbReference>
<dbReference type="NCBIfam" id="NF009622">
    <property type="entry name" value="PRK13128.1"/>
    <property type="match status" value="1"/>
</dbReference>
<dbReference type="PANTHER" id="PTHR46825:SF9">
    <property type="entry name" value="BETA-LACTAMASE-RELATED DOMAIN-CONTAINING PROTEIN"/>
    <property type="match status" value="1"/>
</dbReference>
<dbReference type="PANTHER" id="PTHR46825">
    <property type="entry name" value="D-ALANYL-D-ALANINE-CARBOXYPEPTIDASE/ENDOPEPTIDASE AMPH"/>
    <property type="match status" value="1"/>
</dbReference>
<dbReference type="Pfam" id="PF00144">
    <property type="entry name" value="Beta-lactamase"/>
    <property type="match status" value="1"/>
</dbReference>
<dbReference type="Pfam" id="PF07930">
    <property type="entry name" value="DAP_B"/>
    <property type="match status" value="1"/>
</dbReference>
<dbReference type="SUPFAM" id="SSF56601">
    <property type="entry name" value="beta-lactamase/transpeptidase-like"/>
    <property type="match status" value="1"/>
</dbReference>
<dbReference type="SUPFAM" id="SSF50886">
    <property type="entry name" value="D-aminopeptidase, middle and C-terminal domains"/>
    <property type="match status" value="2"/>
</dbReference>
<evidence type="ECO:0000255" key="1">
    <source>
        <dbReference type="HAMAP-Rule" id="MF_01960"/>
    </source>
</evidence>
<organism>
    <name type="scientific">Cereibacter sphaeroides (strain ATCC 17029 / ATH 2.4.9)</name>
    <name type="common">Rhodobacter sphaeroides</name>
    <dbReference type="NCBI Taxonomy" id="349101"/>
    <lineage>
        <taxon>Bacteria</taxon>
        <taxon>Pseudomonadati</taxon>
        <taxon>Pseudomonadota</taxon>
        <taxon>Alphaproteobacteria</taxon>
        <taxon>Rhodobacterales</taxon>
        <taxon>Paracoccaceae</taxon>
        <taxon>Cereibacter</taxon>
    </lineage>
</organism>
<reference key="1">
    <citation type="submission" date="2007-02" db="EMBL/GenBank/DDBJ databases">
        <title>Complete sequence of chromosome 2 of Rhodobacter sphaeroides ATCC 17029.</title>
        <authorList>
            <person name="Copeland A."/>
            <person name="Lucas S."/>
            <person name="Lapidus A."/>
            <person name="Barry K."/>
            <person name="Detter J.C."/>
            <person name="Glavina del Rio T."/>
            <person name="Hammon N."/>
            <person name="Israni S."/>
            <person name="Dalin E."/>
            <person name="Tice H."/>
            <person name="Pitluck S."/>
            <person name="Kiss H."/>
            <person name="Brettin T."/>
            <person name="Bruce D."/>
            <person name="Han C."/>
            <person name="Tapia R."/>
            <person name="Gilna P."/>
            <person name="Schmutz J."/>
            <person name="Larimer F."/>
            <person name="Land M."/>
            <person name="Hauser L."/>
            <person name="Kyrpides N."/>
            <person name="Mikhailova N."/>
            <person name="Richardson P."/>
            <person name="Mackenzie C."/>
            <person name="Choudhary M."/>
            <person name="Donohue T.J."/>
            <person name="Kaplan S."/>
        </authorList>
    </citation>
    <scope>NUCLEOTIDE SEQUENCE [LARGE SCALE GENOMIC DNA]</scope>
    <source>
        <strain>ATCC 17029 / ATH 2.4.9</strain>
    </source>
</reference>
<gene>
    <name evidence="1" type="primary">dap</name>
    <name type="ordered locus">Rsph17029_3981</name>
</gene>
<protein>
    <recommendedName>
        <fullName evidence="1">D-aminopeptidase</fullName>
        <ecNumber evidence="1">3.4.11.19</ecNumber>
    </recommendedName>
</protein>
<accession>A3PRU3</accession>
<keyword id="KW-0031">Aminopeptidase</keyword>
<keyword id="KW-0378">Hydrolase</keyword>
<keyword id="KW-0645">Protease</keyword>
<proteinExistence type="inferred from homology"/>
<sequence>MTLDLDALDRALDALPNLFRGPGGVAGVVKDGQVVASRAWGYADLTRRRPMETGTRLPICSISKQFTCGVLLDTLGDTAAYDARVAEFLPQFEGPLPTLRQLCDNQSGLRDYWALTVLQGAEATQTFRREDALPLIARMKTGHFPPGTAYSYCNCNFRIVSEILESETGRALPDLYAERIFGPAGMRTAELTSDTRHPADEVVGYEGSDAVGFFPADNGIFWIGDAGISASLQDMLAYESWIDATRDDENSIYRRISVPPAYVCGTPASYGFGLSHETVAGLKVTGHGGALRGFRAQRFHAADERLSVVVIFNHEASAHAAASSLLAAALGHEAPKGAGPEGWAGQWLDPESGLLLRVGEDAEGLTLRFATGPDRLTVGEDGVPRGAGVSLAREGATLVMNRTSDNLTVRAEPLPVVAVADAGEIAGRYHARELEADLVIEARDGGAYAGFEGLLGAGPMERLHPVGPDVWIVTTRRSMDAPAPGDWTLQVRREGGAVAGLRLGCWLARRIDYARV</sequence>
<comment type="function">
    <text evidence="1">Hydrolyzes N-terminal residues in D-amino acid-containing peptides.</text>
</comment>
<comment type="catalytic activity">
    <reaction evidence="1">
        <text>Release of an N-terminal D-amino acid from a peptide, Xaa-|-Yaa-, in which Xaa is preferably D-Ala, D-Ser or D-Thr. D-amino acid amides and methyl esters also are hydrolyzed, as is glycine amide.</text>
        <dbReference type="EC" id="3.4.11.19"/>
    </reaction>
</comment>
<comment type="activity regulation">
    <text evidence="1">Inhibited by beta-lactam compounds such as 6-aminopenicillic acid, 7-aminocephalosporanic acid, benzylpenicillin and ampicillin. Inhibited by p-chloromercuribenzoate.</text>
</comment>
<comment type="subunit">
    <text evidence="1">Homodimer.</text>
</comment>
<comment type="similarity">
    <text evidence="1">Belongs to the peptidase S12 family.</text>
</comment>
<name>DAP_CERS1</name>